<organism>
    <name type="scientific">Enterobacteria phage T4</name>
    <name type="common">Bacteriophage T4</name>
    <dbReference type="NCBI Taxonomy" id="10665"/>
    <lineage>
        <taxon>Viruses</taxon>
        <taxon>Duplodnaviria</taxon>
        <taxon>Heunggongvirae</taxon>
        <taxon>Uroviricota</taxon>
        <taxon>Caudoviricetes</taxon>
        <taxon>Straboviridae</taxon>
        <taxon>Tevenvirinae</taxon>
        <taxon>Tequatrovirus</taxon>
    </lineage>
</organism>
<name>Y06N_BPT4</name>
<organismHost>
    <name type="scientific">Escherichia coli</name>
    <dbReference type="NCBI Taxonomy" id="562"/>
</organismHost>
<reference key="1">
    <citation type="submission" date="1991-01" db="EMBL/GenBank/DDBJ databases">
        <authorList>
            <person name="Efimov V.P."/>
            <person name="Kutter E.M."/>
            <person name="Mesyanhinov V.V."/>
            <person name="Schneider R."/>
        </authorList>
    </citation>
    <scope>NUCLEOTIDE SEQUENCE [GENOMIC DNA]</scope>
</reference>
<reference key="2">
    <citation type="submission" date="1994-08" db="EMBL/GenBank/DDBJ databases">
        <title>Analysis of the region between lysozyme and the tRNA genes of bacteriophage T4.</title>
        <authorList>
            <person name="Anderson B."/>
            <person name="Zurabishvili T."/>
            <person name="Marusich E."/>
            <person name="Schneider M."/>
            <person name="Mullins T."/>
            <person name="Napuli A."/>
            <person name="Mesyanzhinov V.V."/>
            <person name="Neitzel J."/>
            <person name="Kutter E."/>
        </authorList>
    </citation>
    <scope>NUCLEOTIDE SEQUENCE [GENOMIC DNA]</scope>
    <source>
        <strain>D</strain>
    </source>
</reference>
<reference key="3">
    <citation type="journal article" date="2003" name="Microbiol. Mol. Biol. Rev.">
        <title>Bacteriophage T4 genome.</title>
        <authorList>
            <person name="Miller E.S."/>
            <person name="Kutter E."/>
            <person name="Mosig G."/>
            <person name="Arisaka F."/>
            <person name="Kunisawa T."/>
            <person name="Ruger W."/>
        </authorList>
    </citation>
    <scope>NUCLEOTIDE SEQUENCE [LARGE SCALE GENOMIC DNA]</scope>
</reference>
<protein>
    <recommendedName>
        <fullName>Uncharacterized 14.2 kDa protein in e-segB intergenic region</fullName>
    </recommendedName>
</protein>
<accession>P32274</accession>
<keyword id="KW-1185">Reference proteome</keyword>
<gene>
    <name type="primary">y06N</name>
    <name type="synonym">e.3</name>
    <name type="synonym">msp6</name>
</gene>
<dbReference type="EMBL" id="X57093">
    <property type="protein sequence ID" value="CAA40373.1"/>
    <property type="molecule type" value="Genomic_DNA"/>
</dbReference>
<dbReference type="EMBL" id="L13089">
    <property type="protein sequence ID" value="AAB59291.1"/>
    <property type="molecule type" value="Genomic_DNA"/>
</dbReference>
<dbReference type="EMBL" id="AF158101">
    <property type="protein sequence ID" value="AAD42571.1"/>
    <property type="molecule type" value="Genomic_DNA"/>
</dbReference>
<dbReference type="PIR" id="S29531">
    <property type="entry name" value="S29531"/>
</dbReference>
<dbReference type="RefSeq" id="NP_049739.1">
    <property type="nucleotide sequence ID" value="NC_000866.4"/>
</dbReference>
<dbReference type="SMR" id="P32274"/>
<dbReference type="GeneID" id="1258686"/>
<dbReference type="KEGG" id="vg:1258686"/>
<dbReference type="OrthoDB" id="19209at10239"/>
<dbReference type="Proteomes" id="UP000009087">
    <property type="component" value="Segment"/>
</dbReference>
<proteinExistence type="predicted"/>
<sequence>MQKPKLNKVKYSFSESFLIFAVALAAALTGSLIGLLIDCFILKISGTVDIIEVWSELCYTKIISLFSFFGIILYFHYDNFKINWQRKKDYKIQLKEYNSYMSYIENESMKEFVIDCRKIK</sequence>
<feature type="chain" id="PRO_0000165145" description="Uncharacterized 14.2 kDa protein in e-segB intergenic region">
    <location>
        <begin position="1"/>
        <end position="120"/>
    </location>
</feature>